<comment type="function">
    <text>The light-harvesting complex (LHC) functions as a light receptor, it captures and delivers excitation energy to photosystems with which it is closely associated.</text>
</comment>
<comment type="cofactor">
    <text evidence="1">Binds at least 14 chlorophylls (8 Chl-a and 6 Chl-b) and carotenoids such as lutein and neoxanthin.</text>
</comment>
<comment type="subunit">
    <text>The LHC complex consists of chlorophyll a-b binding proteins.</text>
</comment>
<comment type="subcellular location">
    <subcellularLocation>
        <location>Plastid</location>
        <location>Chloroplast thylakoid membrane</location>
        <topology>Multi-pass membrane protein</topology>
    </subcellularLocation>
</comment>
<comment type="domain">
    <text>The N-terminus of the protein extends into the stroma where it is involved with adhesion of granal membranes and post-translational modifications; both are believed to mediate the distribution of excitation energy between photosystems I and II.</text>
</comment>
<comment type="PTM">
    <text evidence="1">Photoregulated by reversible phosphorylation of its threonine residues.</text>
</comment>
<comment type="similarity">
    <text evidence="5">Belongs to the light-harvesting chlorophyll a/b-binding (LHC) protein family.</text>
</comment>
<feature type="transit peptide" description="Chloroplast" evidence="5">
    <location>
        <begin position="1"/>
        <end position="37"/>
    </location>
</feature>
<feature type="chain" id="PRO_0000003668" description="Chlorophyll a-b binding protein 4, chloroplastic">
    <location>
        <begin position="38"/>
        <end position="265"/>
    </location>
</feature>
<feature type="transmembrane region" description="Helical" evidence="4">
    <location>
        <begin position="99"/>
        <end position="119"/>
    </location>
</feature>
<feature type="transmembrane region" description="Helical" evidence="4">
    <location>
        <begin position="151"/>
        <end position="171"/>
    </location>
</feature>
<feature type="transmembrane region" description="Helical" evidence="4">
    <location>
        <begin position="219"/>
        <end position="239"/>
    </location>
</feature>
<feature type="binding site" description="axial binding residue" evidence="3">
    <location>
        <position position="57"/>
    </location>
    <ligand>
        <name>chlorophyll b</name>
        <dbReference type="ChEBI" id="CHEBI:61721"/>
        <label>1</label>
    </ligand>
    <ligandPart>
        <name>Mg</name>
        <dbReference type="ChEBI" id="CHEBI:25107"/>
    </ligandPart>
</feature>
<feature type="binding site" evidence="1">
    <location>
        <position position="79"/>
    </location>
    <ligand>
        <name>chlorophyll a</name>
        <dbReference type="ChEBI" id="CHEBI:58416"/>
        <label>1</label>
    </ligand>
</feature>
<feature type="binding site" evidence="1">
    <location>
        <position position="85"/>
    </location>
    <ligand>
        <name>chlorophyll a</name>
        <dbReference type="ChEBI" id="CHEBI:58416"/>
        <label>1</label>
    </ligand>
</feature>
<feature type="binding site" description="axial binding residue" evidence="3">
    <location>
        <position position="98"/>
    </location>
    <ligand>
        <name>chlorophyll a</name>
        <dbReference type="ChEBI" id="CHEBI:58416"/>
        <label>1</label>
    </ligand>
    <ligandPart>
        <name>Mg</name>
        <dbReference type="ChEBI" id="CHEBI:25107"/>
    </ligandPart>
</feature>
<feature type="binding site" description="axial binding residue" evidence="3">
    <location>
        <position position="101"/>
    </location>
    <ligand>
        <name>chlorophyll a</name>
        <dbReference type="ChEBI" id="CHEBI:58416"/>
        <label>2</label>
    </ligand>
    <ligandPart>
        <name>Mg</name>
        <dbReference type="ChEBI" id="CHEBI:25107"/>
    </ligandPart>
</feature>
<feature type="binding site" evidence="1">
    <location>
        <position position="103"/>
    </location>
    <ligand>
        <name>chlorophyll b</name>
        <dbReference type="ChEBI" id="CHEBI:61721"/>
        <label>2</label>
    </ligand>
</feature>
<feature type="binding site" evidence="1">
    <location>
        <position position="136"/>
    </location>
    <ligand>
        <name>chlorophyll a</name>
        <dbReference type="ChEBI" id="CHEBI:58416"/>
        <label>3</label>
    </ligand>
</feature>
<feature type="binding site" evidence="1">
    <location>
        <position position="146"/>
    </location>
    <ligand>
        <name>chlorophyll a</name>
        <dbReference type="ChEBI" id="CHEBI:58416"/>
        <label>3</label>
    </ligand>
</feature>
<feature type="binding site" description="axial binding residue" evidence="3">
    <location>
        <position position="152"/>
    </location>
    <ligand>
        <name>chlorophyll b</name>
        <dbReference type="ChEBI" id="CHEBI:61721"/>
        <label>2</label>
    </ligand>
    <ligandPart>
        <name>Mg</name>
        <dbReference type="ChEBI" id="CHEBI:25107"/>
    </ligandPart>
</feature>
<feature type="binding site" evidence="1">
    <location>
        <position position="156"/>
    </location>
    <ligand>
        <name>chlorophyll b</name>
        <dbReference type="ChEBI" id="CHEBI:61721"/>
        <label>3</label>
    </ligand>
</feature>
<feature type="binding site" evidence="1">
    <location>
        <position position="164"/>
    </location>
    <ligand>
        <name>chlorophyll b</name>
        <dbReference type="ChEBI" id="CHEBI:61721"/>
        <label>4</label>
    </ligand>
</feature>
<feature type="binding site" evidence="2">
    <location>
        <position position="164"/>
    </location>
    <ligand>
        <name>chlorophyll b</name>
        <dbReference type="ChEBI" id="CHEBI:61721"/>
        <label>5</label>
    </ligand>
</feature>
<feature type="binding site" description="axial binding residue" evidence="3">
    <location>
        <position position="172"/>
    </location>
    <ligand>
        <name>chlorophyll b</name>
        <dbReference type="ChEBI" id="CHEBI:61721"/>
        <label>3</label>
    </ligand>
    <ligandPart>
        <name>Mg</name>
        <dbReference type="ChEBI" id="CHEBI:25107"/>
    </ligandPart>
</feature>
<feature type="binding site" evidence="1">
    <location>
        <position position="175"/>
    </location>
    <ligand>
        <name>chlorophyll b</name>
        <dbReference type="ChEBI" id="CHEBI:61721"/>
        <label>4</label>
    </ligand>
</feature>
<feature type="binding site" evidence="1">
    <location>
        <position position="181"/>
    </location>
    <ligand>
        <name>chlorophyll b</name>
        <dbReference type="ChEBI" id="CHEBI:61721"/>
        <label>2</label>
    </ligand>
</feature>
<feature type="binding site" evidence="1">
    <location>
        <position position="212"/>
    </location>
    <ligand>
        <name>chlorophyll a</name>
        <dbReference type="ChEBI" id="CHEBI:58416"/>
        <label>5</label>
    </ligand>
</feature>
<feature type="binding site" description="axial binding residue" evidence="3">
    <location>
        <position position="213"/>
    </location>
    <ligand>
        <name>chlorophyll a</name>
        <dbReference type="ChEBI" id="CHEBI:58416"/>
        <label>3</label>
    </ligand>
    <ligandPart>
        <name>Mg</name>
        <dbReference type="ChEBI" id="CHEBI:25107"/>
    </ligandPart>
</feature>
<feature type="binding site" description="axial binding residue" evidence="3">
    <location>
        <position position="216"/>
    </location>
    <ligand>
        <name>chlorophyll a</name>
        <dbReference type="ChEBI" id="CHEBI:58416"/>
        <label>4</label>
    </ligand>
    <ligandPart>
        <name>Mg</name>
        <dbReference type="ChEBI" id="CHEBI:25107"/>
    </ligandPart>
</feature>
<feature type="binding site" evidence="1">
    <location>
        <position position="218"/>
    </location>
    <ligand>
        <name>chlorophyll a</name>
        <dbReference type="ChEBI" id="CHEBI:58416"/>
        <label>1</label>
    </ligand>
</feature>
<feature type="binding site" description="axial binding residue" evidence="3">
    <location>
        <position position="230"/>
    </location>
    <ligand>
        <name>chlorophyll a</name>
        <dbReference type="ChEBI" id="CHEBI:58416"/>
        <label>5</label>
    </ligand>
    <ligandPart>
        <name>Mg</name>
        <dbReference type="ChEBI" id="CHEBI:25107"/>
    </ligandPart>
</feature>
<feature type="binding site" description="axial binding residue" evidence="3">
    <location>
        <position position="245"/>
    </location>
    <ligand>
        <name>chlorophyll a</name>
        <dbReference type="ChEBI" id="CHEBI:58416"/>
        <label>6</label>
    </ligand>
    <ligandPart>
        <name>Mg</name>
        <dbReference type="ChEBI" id="CHEBI:25107"/>
    </ligandPart>
</feature>
<feature type="binding site" evidence="1">
    <location>
        <position position="254"/>
    </location>
    <ligand>
        <name>chlorophyll a</name>
        <dbReference type="ChEBI" id="CHEBI:58416"/>
        <label>6</label>
    </ligand>
</feature>
<feature type="binding site" evidence="1">
    <location>
        <position position="261"/>
    </location>
    <ligand>
        <name>chlorophyll b</name>
        <dbReference type="ChEBI" id="CHEBI:61721"/>
        <label>5</label>
    </ligand>
</feature>
<feature type="modified residue" description="N2-acetylarginine" evidence="1">
    <location>
        <position position="38"/>
    </location>
</feature>
<feature type="modified residue" description="Phosphothreonine" evidence="1">
    <location>
        <position position="40"/>
    </location>
</feature>
<evidence type="ECO:0000250" key="1"/>
<evidence type="ECO:0000250" key="2">
    <source>
        <dbReference type="UniProtKB" id="P07371"/>
    </source>
</evidence>
<evidence type="ECO:0000250" key="3">
    <source>
        <dbReference type="UniProtKB" id="P12333"/>
    </source>
</evidence>
<evidence type="ECO:0000255" key="4"/>
<evidence type="ECO:0000305" key="5"/>
<organism>
    <name type="scientific">Solanum lycopersicum</name>
    <name type="common">Tomato</name>
    <name type="synonym">Lycopersicon esculentum</name>
    <dbReference type="NCBI Taxonomy" id="4081"/>
    <lineage>
        <taxon>Eukaryota</taxon>
        <taxon>Viridiplantae</taxon>
        <taxon>Streptophyta</taxon>
        <taxon>Embryophyta</taxon>
        <taxon>Tracheophyta</taxon>
        <taxon>Spermatophyta</taxon>
        <taxon>Magnoliopsida</taxon>
        <taxon>eudicotyledons</taxon>
        <taxon>Gunneridae</taxon>
        <taxon>Pentapetalae</taxon>
        <taxon>asterids</taxon>
        <taxon>lamiids</taxon>
        <taxon>Solanales</taxon>
        <taxon>Solanaceae</taxon>
        <taxon>Solanoideae</taxon>
        <taxon>Solaneae</taxon>
        <taxon>Solanum</taxon>
        <taxon>Solanum subgen. Lycopersicon</taxon>
    </lineage>
</organism>
<accession>P14278</accession>
<keyword id="KW-0007">Acetylation</keyword>
<keyword id="KW-0148">Chlorophyll</keyword>
<keyword id="KW-0150">Chloroplast</keyword>
<keyword id="KW-0157">Chromophore</keyword>
<keyword id="KW-0460">Magnesium</keyword>
<keyword id="KW-0472">Membrane</keyword>
<keyword id="KW-0479">Metal-binding</keyword>
<keyword id="KW-0597">Phosphoprotein</keyword>
<keyword id="KW-0602">Photosynthesis</keyword>
<keyword id="KW-0603">Photosystem I</keyword>
<keyword id="KW-0604">Photosystem II</keyword>
<keyword id="KW-0934">Plastid</keyword>
<keyword id="KW-1185">Reference proteome</keyword>
<keyword id="KW-0793">Thylakoid</keyword>
<keyword id="KW-0809">Transit peptide</keyword>
<keyword id="KW-0812">Transmembrane</keyword>
<keyword id="KW-1133">Transmembrane helix</keyword>
<reference key="1">
    <citation type="journal article" date="1987" name="Plant Mol. Biol.">
        <title>The tomato Cab-4 and Cab-5 genes encode a second type of CAB polypeptides localized in photosystem II.</title>
        <authorList>
            <person name="Pichersky E."/>
            <person name="Hoffman N.E."/>
            <person name="Malik V.S."/>
            <person name="Bernatzky R."/>
            <person name="Tanksley S.D."/>
            <person name="Szabo L."/>
            <person name="Cashmore A.R."/>
        </authorList>
        <dbReference type="AGRICOLA" id="IND92000041"/>
    </citation>
    <scope>NUCLEOTIDE SEQUENCE [MRNA]</scope>
</reference>
<name>CB24_SOLLC</name>
<protein>
    <recommendedName>
        <fullName>Chlorophyll a-b binding protein 4, chloroplastic</fullName>
    </recommendedName>
    <alternativeName>
        <fullName>LHCII type I CAB-4</fullName>
        <shortName>LHCP</shortName>
    </alternativeName>
</protein>
<proteinExistence type="evidence at transcript level"/>
<dbReference type="EMBL" id="M17558">
    <property type="protein sequence ID" value="AAA34141.1"/>
    <property type="molecule type" value="mRNA"/>
</dbReference>
<dbReference type="PIR" id="S10857">
    <property type="entry name" value="S10857"/>
</dbReference>
<dbReference type="RefSeq" id="NP_001234739.1">
    <property type="nucleotide sequence ID" value="NM_001247810.2"/>
</dbReference>
<dbReference type="SMR" id="P14278"/>
<dbReference type="FunCoup" id="P14278">
    <property type="interactions" value="787"/>
</dbReference>
<dbReference type="STRING" id="4081.P14278"/>
<dbReference type="PaxDb" id="4081-Solyc07g047850.2.1"/>
<dbReference type="GeneID" id="543975"/>
<dbReference type="KEGG" id="sly:543975"/>
<dbReference type="eggNOG" id="ENOG502QPU1">
    <property type="taxonomic scope" value="Eukaryota"/>
</dbReference>
<dbReference type="HOGENOM" id="CLU_057943_2_0_1"/>
<dbReference type="InParanoid" id="P14278"/>
<dbReference type="OrthoDB" id="423598at2759"/>
<dbReference type="PhylomeDB" id="P14278"/>
<dbReference type="Proteomes" id="UP000004994">
    <property type="component" value="Unplaced"/>
</dbReference>
<dbReference type="ExpressionAtlas" id="P14278">
    <property type="expression patterns" value="baseline and differential"/>
</dbReference>
<dbReference type="GO" id="GO:0009535">
    <property type="term" value="C:chloroplast thylakoid membrane"/>
    <property type="evidence" value="ECO:0000318"/>
    <property type="project" value="GO_Central"/>
</dbReference>
<dbReference type="GO" id="GO:0009522">
    <property type="term" value="C:photosystem I"/>
    <property type="evidence" value="ECO:0007669"/>
    <property type="project" value="UniProtKB-KW"/>
</dbReference>
<dbReference type="GO" id="GO:0009523">
    <property type="term" value="C:photosystem II"/>
    <property type="evidence" value="ECO:0007669"/>
    <property type="project" value="UniProtKB-KW"/>
</dbReference>
<dbReference type="GO" id="GO:0016168">
    <property type="term" value="F:chlorophyll binding"/>
    <property type="evidence" value="ECO:0007669"/>
    <property type="project" value="UniProtKB-KW"/>
</dbReference>
<dbReference type="GO" id="GO:0046872">
    <property type="term" value="F:metal ion binding"/>
    <property type="evidence" value="ECO:0007669"/>
    <property type="project" value="UniProtKB-KW"/>
</dbReference>
<dbReference type="GO" id="GO:0009768">
    <property type="term" value="P:photosynthesis, light harvesting in photosystem I"/>
    <property type="evidence" value="ECO:0000318"/>
    <property type="project" value="GO_Central"/>
</dbReference>
<dbReference type="GO" id="GO:0009416">
    <property type="term" value="P:response to light stimulus"/>
    <property type="evidence" value="ECO:0000318"/>
    <property type="project" value="GO_Central"/>
</dbReference>
<dbReference type="FunFam" id="1.10.3460.10:FF:000001">
    <property type="entry name" value="Chlorophyll a-b binding protein, chloroplastic"/>
    <property type="match status" value="1"/>
</dbReference>
<dbReference type="Gene3D" id="1.10.3460.10">
    <property type="entry name" value="Chlorophyll a/b binding protein domain"/>
    <property type="match status" value="1"/>
</dbReference>
<dbReference type="InterPro" id="IPR001344">
    <property type="entry name" value="Chloro_AB-bd_pln"/>
</dbReference>
<dbReference type="InterPro" id="IPR022796">
    <property type="entry name" value="Chloroa_b-bind"/>
</dbReference>
<dbReference type="PANTHER" id="PTHR21649">
    <property type="entry name" value="CHLOROPHYLL A/B BINDING PROTEIN"/>
    <property type="match status" value="1"/>
</dbReference>
<dbReference type="Pfam" id="PF00504">
    <property type="entry name" value="Chloroa_b-bind"/>
    <property type="match status" value="1"/>
</dbReference>
<dbReference type="SUPFAM" id="SSF103511">
    <property type="entry name" value="Chlorophyll a-b binding protein"/>
    <property type="match status" value="1"/>
</dbReference>
<gene>
    <name type="primary">CAB4</name>
</gene>
<sequence length="265" mass="28775">MATCAIQQSAFVGQAVGKSQNEFIRKVGNFGEGRITMRRTVKSAPQSIWYGEDRPKYLGPFSEQTPSYLTGEFPGDYGWDTAGLSADPETFARNRELEVIHCRWAMLGALGCVFPEILSKNGVKFGEAVWFKAGSQIFSEGGLDYLGNPNLVHAQSILAIWACQVVLMGFVEGYRVGGGPLGEGLDKIYPGGAFDPLGLADDPEAFAELKVKEIKNGRLAMFSMFGFFVQAIVTGKGPIENLSDHINDPVANNAWAYATNFVPGK</sequence>